<feature type="chain" id="PRO_1000015903" description="Glutamyl-tRNA(Gln) amidotransferase subunit A">
    <location>
        <begin position="1"/>
        <end position="480"/>
    </location>
</feature>
<feature type="active site" description="Charge relay system" evidence="1">
    <location>
        <position position="74"/>
    </location>
</feature>
<feature type="active site" description="Charge relay system" evidence="1">
    <location>
        <position position="149"/>
    </location>
</feature>
<feature type="active site" description="Acyl-ester intermediate" evidence="1">
    <location>
        <position position="173"/>
    </location>
</feature>
<sequence length="480" mass="52106">MHTKTIVELAQGFKDKDFSCVELTQYYLNRIDQSDLNAFITVTDELALAQAQVADDKIASGNANILTGIPYAHKDIFCTKGVKTSAGSRMLDTFVSPYDATVSQKLNQVNLVMLGKTNMDEFAMGSSNENSFYGAVKNPWNYLKIPGGSSGGSAASVAGGLSCFATGTDTGGSIRQPASLCGITGIKPTYGRISRYGMIAYASSLDQAGPMTKTAQDAAIVLNVMAGFDEKDSTSVEQKVPDYTTHLNDSIKGLIIGLPKEFFSSGLDDEVANNIMAAVKEFEAMGAIVKEVSLPNLAYAIPVYYIVAPCECSSNLSRLDGVRYGYRAKNVKNLEDLYLRSRSEGFGEEVKRRIMIGAYALSAGYYDAYYLKAQKVRHLISDDFKKVFEQIDVIMGPVSPTTAFDLGSVKDPVSMYLADIYTLSANLAGLPGMSIPAGFAQNLPVGLQLIGNFWSESRLLNIAHQFQLQTDWHLKTPQEC</sequence>
<comment type="function">
    <text evidence="1">Allows the formation of correctly charged Gln-tRNA(Gln) through the transamidation of misacylated Glu-tRNA(Gln) in organisms which lack glutaminyl-tRNA synthetase. The reaction takes place in the presence of glutamine and ATP through an activated gamma-phospho-Glu-tRNA(Gln).</text>
</comment>
<comment type="catalytic activity">
    <reaction evidence="1">
        <text>L-glutamyl-tRNA(Gln) + L-glutamine + ATP + H2O = L-glutaminyl-tRNA(Gln) + L-glutamate + ADP + phosphate + H(+)</text>
        <dbReference type="Rhea" id="RHEA:17521"/>
        <dbReference type="Rhea" id="RHEA-COMP:9681"/>
        <dbReference type="Rhea" id="RHEA-COMP:9684"/>
        <dbReference type="ChEBI" id="CHEBI:15377"/>
        <dbReference type="ChEBI" id="CHEBI:15378"/>
        <dbReference type="ChEBI" id="CHEBI:29985"/>
        <dbReference type="ChEBI" id="CHEBI:30616"/>
        <dbReference type="ChEBI" id="CHEBI:43474"/>
        <dbReference type="ChEBI" id="CHEBI:58359"/>
        <dbReference type="ChEBI" id="CHEBI:78520"/>
        <dbReference type="ChEBI" id="CHEBI:78521"/>
        <dbReference type="ChEBI" id="CHEBI:456216"/>
        <dbReference type="EC" id="6.3.5.7"/>
    </reaction>
</comment>
<comment type="subunit">
    <text evidence="1">Heterotrimer of A, B and C subunits.</text>
</comment>
<comment type="similarity">
    <text evidence="1">Belongs to the amidase family. GatA subfamily.</text>
</comment>
<dbReference type="EC" id="6.3.5.7" evidence="1"/>
<dbReference type="EMBL" id="CP000488">
    <property type="protein sequence ID" value="ABL02120.1"/>
    <property type="molecule type" value="Genomic_DNA"/>
</dbReference>
<dbReference type="RefSeq" id="WP_011737745.1">
    <property type="nucleotide sequence ID" value="NC_008610.1"/>
</dbReference>
<dbReference type="SMR" id="A1AW13"/>
<dbReference type="STRING" id="413404.Rmag_0344"/>
<dbReference type="KEGG" id="rma:Rmag_0344"/>
<dbReference type="eggNOG" id="COG0154">
    <property type="taxonomic scope" value="Bacteria"/>
</dbReference>
<dbReference type="HOGENOM" id="CLU_009600_0_3_6"/>
<dbReference type="OrthoDB" id="9811471at2"/>
<dbReference type="Proteomes" id="UP000002587">
    <property type="component" value="Chromosome"/>
</dbReference>
<dbReference type="GO" id="GO:0030956">
    <property type="term" value="C:glutamyl-tRNA(Gln) amidotransferase complex"/>
    <property type="evidence" value="ECO:0007669"/>
    <property type="project" value="InterPro"/>
</dbReference>
<dbReference type="GO" id="GO:0005524">
    <property type="term" value="F:ATP binding"/>
    <property type="evidence" value="ECO:0007669"/>
    <property type="project" value="UniProtKB-KW"/>
</dbReference>
<dbReference type="GO" id="GO:0050567">
    <property type="term" value="F:glutaminyl-tRNA synthase (glutamine-hydrolyzing) activity"/>
    <property type="evidence" value="ECO:0007669"/>
    <property type="project" value="UniProtKB-UniRule"/>
</dbReference>
<dbReference type="GO" id="GO:0006412">
    <property type="term" value="P:translation"/>
    <property type="evidence" value="ECO:0007669"/>
    <property type="project" value="UniProtKB-UniRule"/>
</dbReference>
<dbReference type="Gene3D" id="3.90.1300.10">
    <property type="entry name" value="Amidase signature (AS) domain"/>
    <property type="match status" value="1"/>
</dbReference>
<dbReference type="HAMAP" id="MF_00120">
    <property type="entry name" value="GatA"/>
    <property type="match status" value="1"/>
</dbReference>
<dbReference type="InterPro" id="IPR000120">
    <property type="entry name" value="Amidase"/>
</dbReference>
<dbReference type="InterPro" id="IPR020556">
    <property type="entry name" value="Amidase_CS"/>
</dbReference>
<dbReference type="InterPro" id="IPR023631">
    <property type="entry name" value="Amidase_dom"/>
</dbReference>
<dbReference type="InterPro" id="IPR036928">
    <property type="entry name" value="AS_sf"/>
</dbReference>
<dbReference type="InterPro" id="IPR004412">
    <property type="entry name" value="GatA"/>
</dbReference>
<dbReference type="NCBIfam" id="TIGR00132">
    <property type="entry name" value="gatA"/>
    <property type="match status" value="1"/>
</dbReference>
<dbReference type="PANTHER" id="PTHR11895:SF151">
    <property type="entry name" value="GLUTAMYL-TRNA(GLN) AMIDOTRANSFERASE SUBUNIT A"/>
    <property type="match status" value="1"/>
</dbReference>
<dbReference type="PANTHER" id="PTHR11895">
    <property type="entry name" value="TRANSAMIDASE"/>
    <property type="match status" value="1"/>
</dbReference>
<dbReference type="Pfam" id="PF01425">
    <property type="entry name" value="Amidase"/>
    <property type="match status" value="1"/>
</dbReference>
<dbReference type="SUPFAM" id="SSF75304">
    <property type="entry name" value="Amidase signature (AS) enzymes"/>
    <property type="match status" value="1"/>
</dbReference>
<dbReference type="PROSITE" id="PS00571">
    <property type="entry name" value="AMIDASES"/>
    <property type="match status" value="1"/>
</dbReference>
<organism>
    <name type="scientific">Ruthia magnifica subsp. Calyptogena magnifica</name>
    <dbReference type="NCBI Taxonomy" id="413404"/>
    <lineage>
        <taxon>Bacteria</taxon>
        <taxon>Pseudomonadati</taxon>
        <taxon>Pseudomonadota</taxon>
        <taxon>Gammaproteobacteria</taxon>
        <taxon>Candidatus Pseudothioglobaceae</taxon>
        <taxon>Candidatus Ruthturnera</taxon>
    </lineage>
</organism>
<proteinExistence type="inferred from homology"/>
<reference key="1">
    <citation type="journal article" date="2007" name="Science">
        <title>The Calyptogena magnifica chemoautotrophic symbiont genome.</title>
        <authorList>
            <person name="Newton I.L.G."/>
            <person name="Woyke T."/>
            <person name="Auchtung T.A."/>
            <person name="Dilly G.F."/>
            <person name="Dutton R.J."/>
            <person name="Fisher M.C."/>
            <person name="Fontanez K.M."/>
            <person name="Lau E."/>
            <person name="Stewart F.J."/>
            <person name="Richardson P.M."/>
            <person name="Barry K.W."/>
            <person name="Saunders E."/>
            <person name="Detter J.C."/>
            <person name="Wu D."/>
            <person name="Eisen J.A."/>
            <person name="Cavanaugh C.M."/>
        </authorList>
    </citation>
    <scope>NUCLEOTIDE SEQUENCE [LARGE SCALE GENOMIC DNA]</scope>
</reference>
<evidence type="ECO:0000255" key="1">
    <source>
        <dbReference type="HAMAP-Rule" id="MF_00120"/>
    </source>
</evidence>
<gene>
    <name evidence="1" type="primary">gatA</name>
    <name type="ordered locus">Rmag_0344</name>
</gene>
<name>GATA_RUTMC</name>
<protein>
    <recommendedName>
        <fullName evidence="1">Glutamyl-tRNA(Gln) amidotransferase subunit A</fullName>
        <shortName evidence="1">Glu-ADT subunit A</shortName>
        <ecNumber evidence="1">6.3.5.7</ecNumber>
    </recommendedName>
</protein>
<accession>A1AW13</accession>
<keyword id="KW-0067">ATP-binding</keyword>
<keyword id="KW-0436">Ligase</keyword>
<keyword id="KW-0547">Nucleotide-binding</keyword>
<keyword id="KW-0648">Protein biosynthesis</keyword>